<dbReference type="EMBL" id="CP000948">
    <property type="protein sequence ID" value="ACB03680.1"/>
    <property type="molecule type" value="Genomic_DNA"/>
</dbReference>
<dbReference type="RefSeq" id="WP_000028953.1">
    <property type="nucleotide sequence ID" value="NC_010473.1"/>
</dbReference>
<dbReference type="SMR" id="B1XB03"/>
<dbReference type="GeneID" id="93774608"/>
<dbReference type="KEGG" id="ecd:ECDH10B_2695"/>
<dbReference type="HOGENOM" id="CLU_069054_5_1_6"/>
<dbReference type="GO" id="GO:0005829">
    <property type="term" value="C:cytosol"/>
    <property type="evidence" value="ECO:0007669"/>
    <property type="project" value="TreeGrafter"/>
</dbReference>
<dbReference type="GO" id="GO:0051537">
    <property type="term" value="F:2 iron, 2 sulfur cluster binding"/>
    <property type="evidence" value="ECO:0007669"/>
    <property type="project" value="TreeGrafter"/>
</dbReference>
<dbReference type="GO" id="GO:0005506">
    <property type="term" value="F:iron ion binding"/>
    <property type="evidence" value="ECO:0007669"/>
    <property type="project" value="UniProtKB-UniRule"/>
</dbReference>
<dbReference type="GO" id="GO:0016226">
    <property type="term" value="P:iron-sulfur cluster assembly"/>
    <property type="evidence" value="ECO:0007669"/>
    <property type="project" value="UniProtKB-UniRule"/>
</dbReference>
<dbReference type="FunFam" id="2.60.300.12:FF:000001">
    <property type="entry name" value="Iron-binding protein IscA"/>
    <property type="match status" value="1"/>
</dbReference>
<dbReference type="Gene3D" id="2.60.300.12">
    <property type="entry name" value="HesB-like domain"/>
    <property type="match status" value="1"/>
</dbReference>
<dbReference type="HAMAP" id="MF_01429">
    <property type="entry name" value="Fe_S_insert_IscA"/>
    <property type="match status" value="1"/>
</dbReference>
<dbReference type="InterPro" id="IPR050322">
    <property type="entry name" value="Fe-S_cluster_asmbl/transfer"/>
</dbReference>
<dbReference type="InterPro" id="IPR000361">
    <property type="entry name" value="FeS_biogenesis"/>
</dbReference>
<dbReference type="InterPro" id="IPR016092">
    <property type="entry name" value="FeS_cluster_insertion"/>
</dbReference>
<dbReference type="InterPro" id="IPR017870">
    <property type="entry name" value="FeS_cluster_insertion_CS"/>
</dbReference>
<dbReference type="InterPro" id="IPR035903">
    <property type="entry name" value="HesB-like_dom_sf"/>
</dbReference>
<dbReference type="InterPro" id="IPR011302">
    <property type="entry name" value="IscA_proteobacteria"/>
</dbReference>
<dbReference type="NCBIfam" id="TIGR00049">
    <property type="entry name" value="iron-sulfur cluster assembly accessory protein"/>
    <property type="match status" value="1"/>
</dbReference>
<dbReference type="NCBIfam" id="TIGR02011">
    <property type="entry name" value="IscA"/>
    <property type="match status" value="1"/>
</dbReference>
<dbReference type="NCBIfam" id="NF007049">
    <property type="entry name" value="PRK09502.1"/>
    <property type="match status" value="1"/>
</dbReference>
<dbReference type="PANTHER" id="PTHR10072:SF41">
    <property type="entry name" value="IRON-SULFUR CLUSTER ASSEMBLY 1 HOMOLOG, MITOCHONDRIAL"/>
    <property type="match status" value="1"/>
</dbReference>
<dbReference type="PANTHER" id="PTHR10072">
    <property type="entry name" value="IRON-SULFUR CLUSTER ASSEMBLY PROTEIN"/>
    <property type="match status" value="1"/>
</dbReference>
<dbReference type="Pfam" id="PF01521">
    <property type="entry name" value="Fe-S_biosyn"/>
    <property type="match status" value="1"/>
</dbReference>
<dbReference type="SUPFAM" id="SSF89360">
    <property type="entry name" value="HesB-like domain"/>
    <property type="match status" value="1"/>
</dbReference>
<dbReference type="PROSITE" id="PS01152">
    <property type="entry name" value="HESB"/>
    <property type="match status" value="1"/>
</dbReference>
<keyword id="KW-0408">Iron</keyword>
<keyword id="KW-0479">Metal-binding</keyword>
<sequence length="107" mass="11556">MSITLSDSAAARVNTFLANRGKGFGLRLGVRTSGCSGMAYVLEFVDEPTPEDIVFEDKGVKVVVDGKSLQFLDGTQLDFVKEGLNEGFKFTNPNVKDECGCGESFHV</sequence>
<organism>
    <name type="scientific">Escherichia coli (strain K12 / DH10B)</name>
    <dbReference type="NCBI Taxonomy" id="316385"/>
    <lineage>
        <taxon>Bacteria</taxon>
        <taxon>Pseudomonadati</taxon>
        <taxon>Pseudomonadota</taxon>
        <taxon>Gammaproteobacteria</taxon>
        <taxon>Enterobacterales</taxon>
        <taxon>Enterobacteriaceae</taxon>
        <taxon>Escherichia</taxon>
    </lineage>
</organism>
<gene>
    <name evidence="1" type="primary">iscA</name>
    <name type="ordered locus">ECDH10B_2695</name>
</gene>
<protein>
    <recommendedName>
        <fullName evidence="1">Iron-binding protein IscA</fullName>
    </recommendedName>
    <alternativeName>
        <fullName evidence="1">Iron-sulfur cluster assembly protein</fullName>
    </alternativeName>
</protein>
<evidence type="ECO:0000255" key="1">
    <source>
        <dbReference type="HAMAP-Rule" id="MF_01429"/>
    </source>
</evidence>
<name>ISCA_ECODH</name>
<accession>B1XB03</accession>
<comment type="function">
    <text evidence="1">Is able to transfer iron-sulfur clusters to apo-ferredoxin. Multiple cycles of [2Fe2S] cluster formation and transfer are observed, suggesting that IscA acts catalytically. Recruits intracellular free iron so as to provide iron for the assembly of transient iron-sulfur cluster in IscU in the presence of IscS, L-cysteine and the thioredoxin reductase system TrxA/TrxB.</text>
</comment>
<comment type="cofactor">
    <cofactor evidence="1">
        <name>Fe cation</name>
        <dbReference type="ChEBI" id="CHEBI:24875"/>
    </cofactor>
    <text evidence="1">Binds 2 iron ions per dimer. The dimer may bind additional iron ions.</text>
</comment>
<comment type="subunit">
    <text evidence="1">Homodimer; may form tetramers and higher multimers.</text>
</comment>
<comment type="similarity">
    <text evidence="1">Belongs to the HesB/IscA family.</text>
</comment>
<feature type="chain" id="PRO_1000145752" description="Iron-binding protein IscA">
    <location>
        <begin position="1"/>
        <end position="107"/>
    </location>
</feature>
<feature type="binding site" evidence="1">
    <location>
        <position position="35"/>
    </location>
    <ligand>
        <name>Fe cation</name>
        <dbReference type="ChEBI" id="CHEBI:24875"/>
    </ligand>
</feature>
<feature type="binding site" evidence="1">
    <location>
        <position position="99"/>
    </location>
    <ligand>
        <name>Fe cation</name>
        <dbReference type="ChEBI" id="CHEBI:24875"/>
    </ligand>
</feature>
<feature type="binding site" evidence="1">
    <location>
        <position position="101"/>
    </location>
    <ligand>
        <name>Fe cation</name>
        <dbReference type="ChEBI" id="CHEBI:24875"/>
    </ligand>
</feature>
<proteinExistence type="inferred from homology"/>
<reference key="1">
    <citation type="journal article" date="2008" name="J. Bacteriol.">
        <title>The complete genome sequence of Escherichia coli DH10B: insights into the biology of a laboratory workhorse.</title>
        <authorList>
            <person name="Durfee T."/>
            <person name="Nelson R."/>
            <person name="Baldwin S."/>
            <person name="Plunkett G. III"/>
            <person name="Burland V."/>
            <person name="Mau B."/>
            <person name="Petrosino J.F."/>
            <person name="Qin X."/>
            <person name="Muzny D.M."/>
            <person name="Ayele M."/>
            <person name="Gibbs R.A."/>
            <person name="Csorgo B."/>
            <person name="Posfai G."/>
            <person name="Weinstock G.M."/>
            <person name="Blattner F.R."/>
        </authorList>
    </citation>
    <scope>NUCLEOTIDE SEQUENCE [LARGE SCALE GENOMIC DNA]</scope>
    <source>
        <strain>K12 / DH10B</strain>
    </source>
</reference>